<reference key="1">
    <citation type="journal article" date="2006" name="Nat. Biotechnol.">
        <title>Complete genome of the mutualistic, N2-fixing grass endophyte Azoarcus sp. strain BH72.</title>
        <authorList>
            <person name="Krause A."/>
            <person name="Ramakumar A."/>
            <person name="Bartels D."/>
            <person name="Battistoni F."/>
            <person name="Bekel T."/>
            <person name="Boch J."/>
            <person name="Boehm M."/>
            <person name="Friedrich F."/>
            <person name="Hurek T."/>
            <person name="Krause L."/>
            <person name="Linke B."/>
            <person name="McHardy A.C."/>
            <person name="Sarkar A."/>
            <person name="Schneiker S."/>
            <person name="Syed A.A."/>
            <person name="Thauer R."/>
            <person name="Vorhoelter F.-J."/>
            <person name="Weidner S."/>
            <person name="Puehler A."/>
            <person name="Reinhold-Hurek B."/>
            <person name="Kaiser O."/>
            <person name="Goesmann A."/>
        </authorList>
    </citation>
    <scope>NUCLEOTIDE SEQUENCE [LARGE SCALE GENOMIC DNA]</scope>
    <source>
        <strain>BH72</strain>
    </source>
</reference>
<accession>A1K471</accession>
<feature type="chain" id="PRO_0000314509" description="Ribosomal RNA large subunit methyltransferase M">
    <location>
        <begin position="1"/>
        <end position="364"/>
    </location>
</feature>
<feature type="active site" description="Proton acceptor" evidence="1">
    <location>
        <position position="315"/>
    </location>
</feature>
<feature type="binding site" evidence="1">
    <location>
        <position position="198"/>
    </location>
    <ligand>
        <name>S-adenosyl-L-methionine</name>
        <dbReference type="ChEBI" id="CHEBI:59789"/>
    </ligand>
</feature>
<feature type="binding site" evidence="1">
    <location>
        <begin position="231"/>
        <end position="234"/>
    </location>
    <ligand>
        <name>S-adenosyl-L-methionine</name>
        <dbReference type="ChEBI" id="CHEBI:59789"/>
    </ligand>
</feature>
<feature type="binding site" evidence="1">
    <location>
        <position position="250"/>
    </location>
    <ligand>
        <name>S-adenosyl-L-methionine</name>
        <dbReference type="ChEBI" id="CHEBI:59789"/>
    </ligand>
</feature>
<feature type="binding site" evidence="1">
    <location>
        <position position="270"/>
    </location>
    <ligand>
        <name>S-adenosyl-L-methionine</name>
        <dbReference type="ChEBI" id="CHEBI:59789"/>
    </ligand>
</feature>
<feature type="binding site" evidence="1">
    <location>
        <position position="286"/>
    </location>
    <ligand>
        <name>S-adenosyl-L-methionine</name>
        <dbReference type="ChEBI" id="CHEBI:59789"/>
    </ligand>
</feature>
<organism>
    <name type="scientific">Azoarcus sp. (strain BH72)</name>
    <dbReference type="NCBI Taxonomy" id="418699"/>
    <lineage>
        <taxon>Bacteria</taxon>
        <taxon>Pseudomonadati</taxon>
        <taxon>Pseudomonadota</taxon>
        <taxon>Betaproteobacteria</taxon>
        <taxon>Rhodocyclales</taxon>
        <taxon>Zoogloeaceae</taxon>
        <taxon>Azoarcus</taxon>
    </lineage>
</organism>
<keyword id="KW-0963">Cytoplasm</keyword>
<keyword id="KW-0489">Methyltransferase</keyword>
<keyword id="KW-1185">Reference proteome</keyword>
<keyword id="KW-0698">rRNA processing</keyword>
<keyword id="KW-0949">S-adenosyl-L-methionine</keyword>
<keyword id="KW-0808">Transferase</keyword>
<proteinExistence type="inferred from homology"/>
<comment type="function">
    <text evidence="1">Catalyzes the 2'-O-methylation at nucleotide C2498 in 23S rRNA.</text>
</comment>
<comment type="catalytic activity">
    <reaction evidence="1">
        <text>cytidine(2498) in 23S rRNA + S-adenosyl-L-methionine = 2'-O-methylcytidine(2498) in 23S rRNA + S-adenosyl-L-homocysteine + H(+)</text>
        <dbReference type="Rhea" id="RHEA:42788"/>
        <dbReference type="Rhea" id="RHEA-COMP:10244"/>
        <dbReference type="Rhea" id="RHEA-COMP:10245"/>
        <dbReference type="ChEBI" id="CHEBI:15378"/>
        <dbReference type="ChEBI" id="CHEBI:57856"/>
        <dbReference type="ChEBI" id="CHEBI:59789"/>
        <dbReference type="ChEBI" id="CHEBI:74495"/>
        <dbReference type="ChEBI" id="CHEBI:82748"/>
        <dbReference type="EC" id="2.1.1.186"/>
    </reaction>
</comment>
<comment type="subunit">
    <text evidence="1">Monomer.</text>
</comment>
<comment type="subcellular location">
    <subcellularLocation>
        <location evidence="1">Cytoplasm</location>
    </subcellularLocation>
</comment>
<comment type="similarity">
    <text evidence="1">Belongs to the class I-like SAM-binding methyltransferase superfamily. RNA methyltransferase RlmE family. RlmM subfamily.</text>
</comment>
<protein>
    <recommendedName>
        <fullName evidence="1">Ribosomal RNA large subunit methyltransferase M</fullName>
        <ecNumber evidence="1">2.1.1.186</ecNumber>
    </recommendedName>
    <alternativeName>
        <fullName evidence="1">23S rRNA (cytidine2498-2'-O)-methyltransferase</fullName>
    </alternativeName>
    <alternativeName>
        <fullName evidence="1">23S rRNA 2'-O-ribose methyltransferase RlmM</fullName>
    </alternativeName>
</protein>
<sequence length="364" mass="40866">MSSHAPASSFSVSGLLAYCRAGFEKELAAEIDDLAADAGLIGYVRTEPGSGYAAFETFEPVPVIKLGEFADWRKPVFARQLLPWFDRIDDLPERDRARPLVDMVKGSGQRFSGVVLETPDTDEAKQRSGFCRRFTEPLTRELEKVGALRLGKPGFPVLHVMFPTATSAWLAAGLKDRCAPWPMGIPRLRMPSNAPSRSTLKLAEAIMTLLSDEERDSLLRAGMRAVDLGAAPGGWTWQLAQRGIRVTAIDNGPLRDTVMATEMVEHLKADGFTWRPQRPVDWMVCDMVEQPSRIASLMAEWIATGRCRHTIFNLKLPMKRRLEAVEQCRELIRKRLASIGPFDLRIKQLYHDREEVTAYLTLKK</sequence>
<evidence type="ECO:0000255" key="1">
    <source>
        <dbReference type="HAMAP-Rule" id="MF_01551"/>
    </source>
</evidence>
<gene>
    <name evidence="1" type="primary">rlmM</name>
    <name type="ordered locus">azo1009</name>
</gene>
<dbReference type="EC" id="2.1.1.186" evidence="1"/>
<dbReference type="EMBL" id="AM406670">
    <property type="protein sequence ID" value="CAL93626.1"/>
    <property type="molecule type" value="Genomic_DNA"/>
</dbReference>
<dbReference type="RefSeq" id="WP_041642346.1">
    <property type="nucleotide sequence ID" value="NC_008702.1"/>
</dbReference>
<dbReference type="SMR" id="A1K471"/>
<dbReference type="STRING" id="62928.azo1009"/>
<dbReference type="KEGG" id="azo:azo1009"/>
<dbReference type="eggNOG" id="COG2933">
    <property type="taxonomic scope" value="Bacteria"/>
</dbReference>
<dbReference type="HOGENOM" id="CLU_043780_0_0_4"/>
<dbReference type="Proteomes" id="UP000002588">
    <property type="component" value="Chromosome"/>
</dbReference>
<dbReference type="GO" id="GO:0005737">
    <property type="term" value="C:cytoplasm"/>
    <property type="evidence" value="ECO:0007669"/>
    <property type="project" value="UniProtKB-SubCell"/>
</dbReference>
<dbReference type="GO" id="GO:0008757">
    <property type="term" value="F:S-adenosylmethionine-dependent methyltransferase activity"/>
    <property type="evidence" value="ECO:0007669"/>
    <property type="project" value="UniProtKB-UniRule"/>
</dbReference>
<dbReference type="GO" id="GO:0032259">
    <property type="term" value="P:methylation"/>
    <property type="evidence" value="ECO:0007669"/>
    <property type="project" value="UniProtKB-KW"/>
</dbReference>
<dbReference type="GO" id="GO:0006364">
    <property type="term" value="P:rRNA processing"/>
    <property type="evidence" value="ECO:0007669"/>
    <property type="project" value="UniProtKB-UniRule"/>
</dbReference>
<dbReference type="Gene3D" id="3.30.2300.20">
    <property type="match status" value="1"/>
</dbReference>
<dbReference type="Gene3D" id="3.30.70.2810">
    <property type="match status" value="1"/>
</dbReference>
<dbReference type="Gene3D" id="3.40.50.150">
    <property type="entry name" value="Vaccinia Virus protein VP39"/>
    <property type="match status" value="1"/>
</dbReference>
<dbReference type="HAMAP" id="MF_01551">
    <property type="entry name" value="23SrRNA_methyltr_M"/>
    <property type="match status" value="1"/>
</dbReference>
<dbReference type="InterPro" id="IPR040739">
    <property type="entry name" value="RlmM_FDX"/>
</dbReference>
<dbReference type="InterPro" id="IPR048646">
    <property type="entry name" value="RlmM_THUMP-like"/>
</dbReference>
<dbReference type="InterPro" id="IPR002877">
    <property type="entry name" value="RNA_MeTrfase_FtsJ_dom"/>
</dbReference>
<dbReference type="InterPro" id="IPR011224">
    <property type="entry name" value="rRNA_MeTrfase_M"/>
</dbReference>
<dbReference type="InterPro" id="IPR029063">
    <property type="entry name" value="SAM-dependent_MTases_sf"/>
</dbReference>
<dbReference type="NCBIfam" id="NF008734">
    <property type="entry name" value="PRK11760.1"/>
    <property type="match status" value="1"/>
</dbReference>
<dbReference type="PANTHER" id="PTHR37524">
    <property type="entry name" value="RIBOSOMAL RNA LARGE SUBUNIT METHYLTRANSFERASE M"/>
    <property type="match status" value="1"/>
</dbReference>
<dbReference type="PANTHER" id="PTHR37524:SF2">
    <property type="entry name" value="RIBOSOMAL RNA METHYLTRANSFERASE FTSJ DOMAIN-CONTAINING PROTEIN"/>
    <property type="match status" value="1"/>
</dbReference>
<dbReference type="Pfam" id="PF01728">
    <property type="entry name" value="FtsJ"/>
    <property type="match status" value="1"/>
</dbReference>
<dbReference type="Pfam" id="PF18125">
    <property type="entry name" value="RlmM_FDX"/>
    <property type="match status" value="1"/>
</dbReference>
<dbReference type="Pfam" id="PF21239">
    <property type="entry name" value="RLMM_N"/>
    <property type="match status" value="1"/>
</dbReference>
<dbReference type="PIRSF" id="PIRSF028774">
    <property type="entry name" value="UCP028774"/>
    <property type="match status" value="1"/>
</dbReference>
<dbReference type="SUPFAM" id="SSF53335">
    <property type="entry name" value="S-adenosyl-L-methionine-dependent methyltransferases"/>
    <property type="match status" value="1"/>
</dbReference>
<name>RLMM_AZOSB</name>